<organism>
    <name type="scientific">Thermoanaerobacter pseudethanolicus (strain ATCC 33223 / 39E)</name>
    <name type="common">Clostridium thermohydrosulfuricum</name>
    <dbReference type="NCBI Taxonomy" id="340099"/>
    <lineage>
        <taxon>Bacteria</taxon>
        <taxon>Bacillati</taxon>
        <taxon>Bacillota</taxon>
        <taxon>Clostridia</taxon>
        <taxon>Thermoanaerobacterales</taxon>
        <taxon>Thermoanaerobacteraceae</taxon>
        <taxon>Thermoanaerobacter</taxon>
    </lineage>
</organism>
<gene>
    <name evidence="1" type="primary">surE</name>
    <name type="ordered locus">Teth39_1148</name>
</gene>
<name>SURE_THEP3</name>
<sequence length="252" mass="28287">MKILLTNDDGVQGLGMLKLAEYLKDKYKVTVVAPEKERSAISHAITLHKPLRLKKVKEEDSLKIYAINGTPSDCVKLGIEVVLREKPDIVISGINEGLNLGTDILYSGTVSAAIEAAIYGIPAIAVSRAETADIEDRRIYKFLENLIEKVLEKGLPKNTLLNVNIPDFKKGIKGVKATILGKSIYIETFQKNYDPRGKEYYWMAGKISEIEKDERTDIVSVKEGYISITPIHFDLTEYNMINILNSWDIKIE</sequence>
<dbReference type="EC" id="3.1.3.5" evidence="1"/>
<dbReference type="EMBL" id="CP000924">
    <property type="protein sequence ID" value="ABY94803.1"/>
    <property type="molecule type" value="Genomic_DNA"/>
</dbReference>
<dbReference type="RefSeq" id="WP_003867979.1">
    <property type="nucleotide sequence ID" value="NC_010321.1"/>
</dbReference>
<dbReference type="SMR" id="B0K9J0"/>
<dbReference type="STRING" id="340099.Teth39_1148"/>
<dbReference type="KEGG" id="tpd:Teth39_1148"/>
<dbReference type="eggNOG" id="COG0496">
    <property type="taxonomic scope" value="Bacteria"/>
</dbReference>
<dbReference type="HOGENOM" id="CLU_045192_1_3_9"/>
<dbReference type="Proteomes" id="UP000002156">
    <property type="component" value="Chromosome"/>
</dbReference>
<dbReference type="GO" id="GO:0005737">
    <property type="term" value="C:cytoplasm"/>
    <property type="evidence" value="ECO:0007669"/>
    <property type="project" value="UniProtKB-SubCell"/>
</dbReference>
<dbReference type="GO" id="GO:0008254">
    <property type="term" value="F:3'-nucleotidase activity"/>
    <property type="evidence" value="ECO:0007669"/>
    <property type="project" value="TreeGrafter"/>
</dbReference>
<dbReference type="GO" id="GO:0008253">
    <property type="term" value="F:5'-nucleotidase activity"/>
    <property type="evidence" value="ECO:0007669"/>
    <property type="project" value="UniProtKB-UniRule"/>
</dbReference>
<dbReference type="GO" id="GO:0004309">
    <property type="term" value="F:exopolyphosphatase activity"/>
    <property type="evidence" value="ECO:0007669"/>
    <property type="project" value="TreeGrafter"/>
</dbReference>
<dbReference type="GO" id="GO:0046872">
    <property type="term" value="F:metal ion binding"/>
    <property type="evidence" value="ECO:0007669"/>
    <property type="project" value="UniProtKB-UniRule"/>
</dbReference>
<dbReference type="GO" id="GO:0000166">
    <property type="term" value="F:nucleotide binding"/>
    <property type="evidence" value="ECO:0007669"/>
    <property type="project" value="UniProtKB-KW"/>
</dbReference>
<dbReference type="FunFam" id="3.40.1210.10:FF:000001">
    <property type="entry name" value="5'/3'-nucleotidase SurE"/>
    <property type="match status" value="1"/>
</dbReference>
<dbReference type="Gene3D" id="3.40.1210.10">
    <property type="entry name" value="Survival protein SurE-like phosphatase/nucleotidase"/>
    <property type="match status" value="1"/>
</dbReference>
<dbReference type="HAMAP" id="MF_00060">
    <property type="entry name" value="SurE"/>
    <property type="match status" value="1"/>
</dbReference>
<dbReference type="InterPro" id="IPR030048">
    <property type="entry name" value="SurE"/>
</dbReference>
<dbReference type="InterPro" id="IPR002828">
    <property type="entry name" value="SurE-like_Pase/nucleotidase"/>
</dbReference>
<dbReference type="InterPro" id="IPR036523">
    <property type="entry name" value="SurE-like_sf"/>
</dbReference>
<dbReference type="NCBIfam" id="NF001490">
    <property type="entry name" value="PRK00346.1-4"/>
    <property type="match status" value="1"/>
</dbReference>
<dbReference type="NCBIfam" id="NF001492">
    <property type="entry name" value="PRK00346.2-2"/>
    <property type="match status" value="1"/>
</dbReference>
<dbReference type="NCBIfam" id="TIGR00087">
    <property type="entry name" value="surE"/>
    <property type="match status" value="1"/>
</dbReference>
<dbReference type="PANTHER" id="PTHR30457">
    <property type="entry name" value="5'-NUCLEOTIDASE SURE"/>
    <property type="match status" value="1"/>
</dbReference>
<dbReference type="PANTHER" id="PTHR30457:SF12">
    <property type="entry name" value="5'_3'-NUCLEOTIDASE SURE"/>
    <property type="match status" value="1"/>
</dbReference>
<dbReference type="Pfam" id="PF01975">
    <property type="entry name" value="SurE"/>
    <property type="match status" value="1"/>
</dbReference>
<dbReference type="SUPFAM" id="SSF64167">
    <property type="entry name" value="SurE-like"/>
    <property type="match status" value="1"/>
</dbReference>
<evidence type="ECO:0000255" key="1">
    <source>
        <dbReference type="HAMAP-Rule" id="MF_00060"/>
    </source>
</evidence>
<feature type="chain" id="PRO_1000092043" description="5'-nucleotidase SurE">
    <location>
        <begin position="1"/>
        <end position="252"/>
    </location>
</feature>
<feature type="binding site" evidence="1">
    <location>
        <position position="8"/>
    </location>
    <ligand>
        <name>a divalent metal cation</name>
        <dbReference type="ChEBI" id="CHEBI:60240"/>
    </ligand>
</feature>
<feature type="binding site" evidence="1">
    <location>
        <position position="9"/>
    </location>
    <ligand>
        <name>a divalent metal cation</name>
        <dbReference type="ChEBI" id="CHEBI:60240"/>
    </ligand>
</feature>
<feature type="binding site" evidence="1">
    <location>
        <position position="39"/>
    </location>
    <ligand>
        <name>a divalent metal cation</name>
        <dbReference type="ChEBI" id="CHEBI:60240"/>
    </ligand>
</feature>
<feature type="binding site" evidence="1">
    <location>
        <position position="95"/>
    </location>
    <ligand>
        <name>a divalent metal cation</name>
        <dbReference type="ChEBI" id="CHEBI:60240"/>
    </ligand>
</feature>
<accession>B0K9J0</accession>
<protein>
    <recommendedName>
        <fullName evidence="1">5'-nucleotidase SurE</fullName>
        <ecNumber evidence="1">3.1.3.5</ecNumber>
    </recommendedName>
    <alternativeName>
        <fullName evidence="1">Nucleoside 5'-monophosphate phosphohydrolase</fullName>
    </alternativeName>
</protein>
<reference key="1">
    <citation type="submission" date="2008-01" db="EMBL/GenBank/DDBJ databases">
        <title>Complete sequence of Thermoanaerobacter pseudethanolicus 39E.</title>
        <authorList>
            <person name="Copeland A."/>
            <person name="Lucas S."/>
            <person name="Lapidus A."/>
            <person name="Barry K."/>
            <person name="Glavina del Rio T."/>
            <person name="Dalin E."/>
            <person name="Tice H."/>
            <person name="Pitluck S."/>
            <person name="Bruce D."/>
            <person name="Goodwin L."/>
            <person name="Saunders E."/>
            <person name="Brettin T."/>
            <person name="Detter J.C."/>
            <person name="Han C."/>
            <person name="Schmutz J."/>
            <person name="Larimer F."/>
            <person name="Land M."/>
            <person name="Hauser L."/>
            <person name="Kyrpides N."/>
            <person name="Lykidis A."/>
            <person name="Hemme C."/>
            <person name="Fields M.W."/>
            <person name="He Z."/>
            <person name="Zhou J."/>
            <person name="Richardson P."/>
        </authorList>
    </citation>
    <scope>NUCLEOTIDE SEQUENCE [LARGE SCALE GENOMIC DNA]</scope>
    <source>
        <strain>ATCC 33223 / DSM 2355 / 39E</strain>
    </source>
</reference>
<comment type="function">
    <text evidence="1">Nucleotidase that shows phosphatase activity on nucleoside 5'-monophosphates.</text>
</comment>
<comment type="catalytic activity">
    <reaction evidence="1">
        <text>a ribonucleoside 5'-phosphate + H2O = a ribonucleoside + phosphate</text>
        <dbReference type="Rhea" id="RHEA:12484"/>
        <dbReference type="ChEBI" id="CHEBI:15377"/>
        <dbReference type="ChEBI" id="CHEBI:18254"/>
        <dbReference type="ChEBI" id="CHEBI:43474"/>
        <dbReference type="ChEBI" id="CHEBI:58043"/>
        <dbReference type="EC" id="3.1.3.5"/>
    </reaction>
</comment>
<comment type="cofactor">
    <cofactor evidence="1">
        <name>a divalent metal cation</name>
        <dbReference type="ChEBI" id="CHEBI:60240"/>
    </cofactor>
    <text evidence="1">Binds 1 divalent metal cation per subunit.</text>
</comment>
<comment type="subcellular location">
    <subcellularLocation>
        <location evidence="1">Cytoplasm</location>
    </subcellularLocation>
</comment>
<comment type="similarity">
    <text evidence="1">Belongs to the SurE nucleotidase family.</text>
</comment>
<keyword id="KW-0963">Cytoplasm</keyword>
<keyword id="KW-0378">Hydrolase</keyword>
<keyword id="KW-0479">Metal-binding</keyword>
<keyword id="KW-0547">Nucleotide-binding</keyword>
<keyword id="KW-1185">Reference proteome</keyword>
<proteinExistence type="inferred from homology"/>